<gene>
    <name type="primary">LPE10</name>
    <name type="ordered locus">YALI0D19514g</name>
</gene>
<name>LPE10_YARLI</name>
<organism>
    <name type="scientific">Yarrowia lipolytica (strain CLIB 122 / E 150)</name>
    <name type="common">Yeast</name>
    <name type="synonym">Candida lipolytica</name>
    <dbReference type="NCBI Taxonomy" id="284591"/>
    <lineage>
        <taxon>Eukaryota</taxon>
        <taxon>Fungi</taxon>
        <taxon>Dikarya</taxon>
        <taxon>Ascomycota</taxon>
        <taxon>Saccharomycotina</taxon>
        <taxon>Dipodascomycetes</taxon>
        <taxon>Dipodascales</taxon>
        <taxon>Dipodascales incertae sedis</taxon>
        <taxon>Yarrowia</taxon>
    </lineage>
</organism>
<accession>Q6C8H7</accession>
<keyword id="KW-0406">Ion transport</keyword>
<keyword id="KW-0460">Magnesium</keyword>
<keyword id="KW-0472">Membrane</keyword>
<keyword id="KW-0496">Mitochondrion</keyword>
<keyword id="KW-0999">Mitochondrion inner membrane</keyword>
<keyword id="KW-1185">Reference proteome</keyword>
<keyword id="KW-0809">Transit peptide</keyword>
<keyword id="KW-0812">Transmembrane</keyword>
<keyword id="KW-1133">Transmembrane helix</keyword>
<keyword id="KW-0813">Transport</keyword>
<sequence length="455" mass="51127">MHIKISTDFAIQNLHCTTMIRPLLRLCGQRTAATPFVSFFRPPKKPLSGISFARHYSPTKKPPSEVPTPTPGNYLVPITGPPGDTPRDTDLLIKSLTHKSLLPENNLVRCTVFDSDGNVTVASGEFKRTELLNKHGLLPRDLRKLDTGVNSIVPTILVRDNSILINLLHIRALIKADKVLLFDVFGSTDSKTQSLFMYDLGHKLKKSNKTMGSLPYEMRALEAIFISVIAALDAEMKVHTTVINGILSELEQDIDREKLRHLLIQSKKLSAFLQKATLIRDVIDELLDTDEDLAGLYLTEKKAGHPRAIDDHSEVEMLLETYYKHCDEIVQTVGNLVSNIRNTEEIVNIILDANRNALMHLDLKFQIGALGLAGGTFIASLYGMNLKNFIEESYWGFLGVTGVASLLTVWIIAHFLKSLRQVQRVTMTSDKKKAMKKKDTVAEKRRNHLRNWLTK</sequence>
<proteinExistence type="inferred from homology"/>
<comment type="function">
    <text evidence="1">Mitochondrial inner membrane magnesium transporter required for mitochondrial magnesium homeostasis. Modulates the conductance of the MRS2 channel. Involved in the splicing of mRNA group II introns in mitochondria by affecting mitochondrial magnesium concentrations, which are critical for group II intron splicing.</text>
</comment>
<comment type="subunit">
    <text evidence="1">Forms homooligomers. Interacts with MRS2.</text>
</comment>
<comment type="subcellular location">
    <subcellularLocation>
        <location evidence="1">Mitochondrion inner membrane</location>
        <topology evidence="1">Multi-pass membrane protein</topology>
    </subcellularLocation>
</comment>
<comment type="similarity">
    <text evidence="4">Belongs to the CorA metal ion transporter (MIT) (TC 1.A.35) family.</text>
</comment>
<reference key="1">
    <citation type="journal article" date="2004" name="Nature">
        <title>Genome evolution in yeasts.</title>
        <authorList>
            <person name="Dujon B."/>
            <person name="Sherman D."/>
            <person name="Fischer G."/>
            <person name="Durrens P."/>
            <person name="Casaregola S."/>
            <person name="Lafontaine I."/>
            <person name="de Montigny J."/>
            <person name="Marck C."/>
            <person name="Neuveglise C."/>
            <person name="Talla E."/>
            <person name="Goffard N."/>
            <person name="Frangeul L."/>
            <person name="Aigle M."/>
            <person name="Anthouard V."/>
            <person name="Babour A."/>
            <person name="Barbe V."/>
            <person name="Barnay S."/>
            <person name="Blanchin S."/>
            <person name="Beckerich J.-M."/>
            <person name="Beyne E."/>
            <person name="Bleykasten C."/>
            <person name="Boisrame A."/>
            <person name="Boyer J."/>
            <person name="Cattolico L."/>
            <person name="Confanioleri F."/>
            <person name="de Daruvar A."/>
            <person name="Despons L."/>
            <person name="Fabre E."/>
            <person name="Fairhead C."/>
            <person name="Ferry-Dumazet H."/>
            <person name="Groppi A."/>
            <person name="Hantraye F."/>
            <person name="Hennequin C."/>
            <person name="Jauniaux N."/>
            <person name="Joyet P."/>
            <person name="Kachouri R."/>
            <person name="Kerrest A."/>
            <person name="Koszul R."/>
            <person name="Lemaire M."/>
            <person name="Lesur I."/>
            <person name="Ma L."/>
            <person name="Muller H."/>
            <person name="Nicaud J.-M."/>
            <person name="Nikolski M."/>
            <person name="Oztas S."/>
            <person name="Ozier-Kalogeropoulos O."/>
            <person name="Pellenz S."/>
            <person name="Potier S."/>
            <person name="Richard G.-F."/>
            <person name="Straub M.-L."/>
            <person name="Suleau A."/>
            <person name="Swennen D."/>
            <person name="Tekaia F."/>
            <person name="Wesolowski-Louvel M."/>
            <person name="Westhof E."/>
            <person name="Wirth B."/>
            <person name="Zeniou-Meyer M."/>
            <person name="Zivanovic Y."/>
            <person name="Bolotin-Fukuhara M."/>
            <person name="Thierry A."/>
            <person name="Bouchier C."/>
            <person name="Caudron B."/>
            <person name="Scarpelli C."/>
            <person name="Gaillardin C."/>
            <person name="Weissenbach J."/>
            <person name="Wincker P."/>
            <person name="Souciet J.-L."/>
        </authorList>
    </citation>
    <scope>NUCLEOTIDE SEQUENCE [LARGE SCALE GENOMIC DNA]</scope>
    <source>
        <strain>CLIB 122 / E 150</strain>
    </source>
</reference>
<protein>
    <recommendedName>
        <fullName>Mitochondrial inner membrane magnesium transporter LPE10</fullName>
    </recommendedName>
</protein>
<dbReference type="EMBL" id="CR382130">
    <property type="protein sequence ID" value="CAG81227.1"/>
    <property type="molecule type" value="Genomic_DNA"/>
</dbReference>
<dbReference type="RefSeq" id="XP_503035.1">
    <property type="nucleotide sequence ID" value="XM_503035.1"/>
</dbReference>
<dbReference type="SMR" id="Q6C8H7"/>
<dbReference type="FunCoup" id="Q6C8H7">
    <property type="interactions" value="331"/>
</dbReference>
<dbReference type="EnsemblFungi" id="CAG81227">
    <property type="protein sequence ID" value="CAG81227"/>
    <property type="gene ID" value="YALI0_D19514g"/>
</dbReference>
<dbReference type="KEGG" id="yli:2911169"/>
<dbReference type="VEuPathDB" id="FungiDB:YALI0_D19514g"/>
<dbReference type="HOGENOM" id="CLU_025144_1_3_1"/>
<dbReference type="InParanoid" id="Q6C8H7"/>
<dbReference type="OMA" id="TRNNCII"/>
<dbReference type="OrthoDB" id="124569at4891"/>
<dbReference type="Proteomes" id="UP000001300">
    <property type="component" value="Chromosome D"/>
</dbReference>
<dbReference type="GO" id="GO:0005743">
    <property type="term" value="C:mitochondrial inner membrane"/>
    <property type="evidence" value="ECO:0000250"/>
    <property type="project" value="UniProtKB"/>
</dbReference>
<dbReference type="GO" id="GO:0015095">
    <property type="term" value="F:magnesium ion transmembrane transporter activity"/>
    <property type="evidence" value="ECO:0000250"/>
    <property type="project" value="UniProtKB"/>
</dbReference>
<dbReference type="GO" id="GO:0045016">
    <property type="term" value="P:mitochondrial magnesium ion transmembrane transport"/>
    <property type="evidence" value="ECO:0000250"/>
    <property type="project" value="UniProtKB"/>
</dbReference>
<dbReference type="CDD" id="cd12823">
    <property type="entry name" value="Mrs2_Mfm1p-like"/>
    <property type="match status" value="1"/>
</dbReference>
<dbReference type="FunFam" id="1.20.58.340:FF:000005">
    <property type="entry name" value="Inner membrane magnesium transporter MRS2"/>
    <property type="match status" value="1"/>
</dbReference>
<dbReference type="FunFam" id="2.40.128.330:FF:000002">
    <property type="entry name" value="Inner membrane magnesium transporter mrs2"/>
    <property type="match status" value="1"/>
</dbReference>
<dbReference type="Gene3D" id="2.40.128.330">
    <property type="match status" value="1"/>
</dbReference>
<dbReference type="Gene3D" id="1.20.58.340">
    <property type="entry name" value="Magnesium transport protein CorA, transmembrane region"/>
    <property type="match status" value="1"/>
</dbReference>
<dbReference type="InterPro" id="IPR039204">
    <property type="entry name" value="MRS2-like"/>
</dbReference>
<dbReference type="PANTHER" id="PTHR13890:SF0">
    <property type="entry name" value="MAGNESIUM TRANSPORTER MRS2 HOMOLOG, MITOCHONDRIAL"/>
    <property type="match status" value="1"/>
</dbReference>
<dbReference type="PANTHER" id="PTHR13890">
    <property type="entry name" value="RNA SPLICING PROTEIN MRS2, MITOCHONDRIAL"/>
    <property type="match status" value="1"/>
</dbReference>
<dbReference type="Pfam" id="PF22099">
    <property type="entry name" value="MRS2-like"/>
    <property type="match status" value="1"/>
</dbReference>
<evidence type="ECO:0000250" key="1">
    <source>
        <dbReference type="UniProtKB" id="Q02783"/>
    </source>
</evidence>
<evidence type="ECO:0000255" key="2"/>
<evidence type="ECO:0000256" key="3">
    <source>
        <dbReference type="SAM" id="MobiDB-lite"/>
    </source>
</evidence>
<evidence type="ECO:0000305" key="4"/>
<feature type="transit peptide" description="Mitochondrion" evidence="2">
    <location>
        <begin position="1"/>
        <end position="56"/>
    </location>
</feature>
<feature type="chain" id="PRO_0000043249" description="Mitochondrial inner membrane magnesium transporter LPE10">
    <location>
        <begin position="57"/>
        <end position="455"/>
    </location>
</feature>
<feature type="transmembrane region" description="Helical" evidence="2">
    <location>
        <begin position="365"/>
        <end position="385"/>
    </location>
</feature>
<feature type="transmembrane region" description="Helical" evidence="2">
    <location>
        <begin position="396"/>
        <end position="416"/>
    </location>
</feature>
<feature type="region of interest" description="Disordered" evidence="3">
    <location>
        <begin position="433"/>
        <end position="455"/>
    </location>
</feature>
<feature type="short sequence motif" description="YGMN">
    <location>
        <begin position="382"/>
        <end position="385"/>
    </location>
</feature>
<feature type="compositionally biased region" description="Basic and acidic residues" evidence="3">
    <location>
        <begin position="433"/>
        <end position="444"/>
    </location>
</feature>